<keyword id="KW-0085">Behavior</keyword>
<keyword id="KW-1003">Cell membrane</keyword>
<keyword id="KW-0966">Cell projection</keyword>
<keyword id="KW-0969">Cilium</keyword>
<keyword id="KW-0175">Coiled coil</keyword>
<keyword id="KW-1015">Disulfide bond</keyword>
<keyword id="KW-0256">Endoplasmic reticulum</keyword>
<keyword id="KW-0325">Glycoprotein</keyword>
<keyword id="KW-0407">Ion channel</keyword>
<keyword id="KW-0406">Ion transport</keyword>
<keyword id="KW-0472">Membrane</keyword>
<keyword id="KW-0597">Phosphoprotein</keyword>
<keyword id="KW-1185">Reference proteome</keyword>
<keyword id="KW-0812">Transmembrane</keyword>
<keyword id="KW-1133">Transmembrane helix</keyword>
<keyword id="KW-0813">Transport</keyword>
<keyword id="KW-0862">Zinc</keyword>
<evidence type="ECO:0000250" key="1">
    <source>
        <dbReference type="UniProtKB" id="Q13563"/>
    </source>
</evidence>
<evidence type="ECO:0000255" key="2"/>
<evidence type="ECO:0000256" key="3">
    <source>
        <dbReference type="SAM" id="MobiDB-lite"/>
    </source>
</evidence>
<evidence type="ECO:0000269" key="4">
    <source>
    </source>
</evidence>
<evidence type="ECO:0000269" key="5">
    <source>
    </source>
</evidence>
<evidence type="ECO:0000269" key="6">
    <source>
    </source>
</evidence>
<evidence type="ECO:0000269" key="7">
    <source>
    </source>
</evidence>
<evidence type="ECO:0000269" key="8">
    <source>
    </source>
</evidence>
<evidence type="ECO:0000269" key="9">
    <source>
    </source>
</evidence>
<evidence type="ECO:0000269" key="10">
    <source>
    </source>
</evidence>
<evidence type="ECO:0000269" key="11">
    <source>
    </source>
</evidence>
<evidence type="ECO:0000269" key="12">
    <source>
    </source>
</evidence>
<evidence type="ECO:0000269" key="13">
    <source>
    </source>
</evidence>
<evidence type="ECO:0000269" key="14">
    <source>
    </source>
</evidence>
<evidence type="ECO:0000269" key="15">
    <source>
    </source>
</evidence>
<evidence type="ECO:0000269" key="16">
    <source>
    </source>
</evidence>
<evidence type="ECO:0000303" key="17">
    <source>
    </source>
</evidence>
<evidence type="ECO:0000305" key="18"/>
<evidence type="ECO:0000312" key="19">
    <source>
        <dbReference type="EMBL" id="CAB60565.3"/>
    </source>
</evidence>
<evidence type="ECO:0000312" key="20">
    <source>
        <dbReference type="WormBase" id="Y73F8A.1"/>
    </source>
</evidence>
<feature type="chain" id="PRO_0000347285" description="Polycystin-2">
    <location>
        <begin position="1"/>
        <end position="716"/>
    </location>
</feature>
<feature type="topological domain" description="Cytoplasmic" evidence="2">
    <location>
        <begin position="1"/>
        <end position="72"/>
    </location>
</feature>
<feature type="transmembrane region" description="Helical" evidence="2">
    <location>
        <begin position="73"/>
        <end position="93"/>
    </location>
</feature>
<feature type="topological domain" description="Extracellular" evidence="2">
    <location>
        <begin position="94"/>
        <end position="324"/>
    </location>
</feature>
<feature type="transmembrane region" description="Helical" evidence="2">
    <location>
        <begin position="325"/>
        <end position="345"/>
    </location>
</feature>
<feature type="topological domain" description="Cytoplasmic" evidence="2">
    <location>
        <begin position="346"/>
        <end position="355"/>
    </location>
</feature>
<feature type="transmembrane region" description="Helical" evidence="2">
    <location>
        <begin position="356"/>
        <end position="376"/>
    </location>
</feature>
<feature type="topological domain" description="Extracellular" evidence="2">
    <location>
        <begin position="377"/>
        <end position="409"/>
    </location>
</feature>
<feature type="transmembrane region" description="Helical" evidence="2">
    <location>
        <begin position="410"/>
        <end position="430"/>
    </location>
</feature>
<feature type="topological domain" description="Cytoplasmic" evidence="2">
    <location>
        <begin position="431"/>
        <end position="447"/>
    </location>
</feature>
<feature type="transmembrane region" description="Helical" evidence="2">
    <location>
        <begin position="448"/>
        <end position="468"/>
    </location>
</feature>
<feature type="topological domain" description="Extracellular" evidence="2">
    <location>
        <begin position="469"/>
        <end position="482"/>
    </location>
</feature>
<feature type="intramembrane region" description="Pore-forming" evidence="1">
    <location>
        <begin position="483"/>
        <end position="497"/>
    </location>
</feature>
<feature type="topological domain" description="Extracellular" evidence="2">
    <location>
        <begin position="498"/>
        <end position="510"/>
    </location>
</feature>
<feature type="transmembrane region" description="Helical" evidence="2">
    <location>
        <begin position="511"/>
        <end position="531"/>
    </location>
</feature>
<feature type="topological domain" description="Cytoplasmic" evidence="2">
    <location>
        <begin position="532"/>
        <end position="716"/>
    </location>
</feature>
<feature type="region of interest" description="Disordered" evidence="3">
    <location>
        <begin position="1"/>
        <end position="44"/>
    </location>
</feature>
<feature type="region of interest" description="Disordered" evidence="3">
    <location>
        <begin position="696"/>
        <end position="716"/>
    </location>
</feature>
<feature type="coiled-coil region" evidence="2">
    <location>
        <begin position="613"/>
        <end position="680"/>
    </location>
</feature>
<feature type="compositionally biased region" description="Basic and acidic residues" evidence="3">
    <location>
        <begin position="1"/>
        <end position="10"/>
    </location>
</feature>
<feature type="compositionally biased region" description="Basic and acidic residues" evidence="3">
    <location>
        <begin position="30"/>
        <end position="41"/>
    </location>
</feature>
<feature type="modified residue" description="Phosphoserine; by CK2" evidence="10">
    <location>
        <position position="534"/>
    </location>
</feature>
<feature type="glycosylation site" description="N-linked (GlcNAc...) asparagine" evidence="2">
    <location>
        <position position="150"/>
    </location>
</feature>
<feature type="glycosylation site" description="N-linked (GlcNAc...) asparagine" evidence="2">
    <location>
        <position position="177"/>
    </location>
</feature>
<feature type="glycosylation site" description="N-linked (GlcNAc...) asparagine" evidence="2">
    <location>
        <position position="377"/>
    </location>
</feature>
<feature type="disulfide bond" evidence="1">
    <location>
        <begin position="180"/>
        <end position="193"/>
    </location>
</feature>
<feature type="mutagenesis site" description="Fails to rescue pkd-2 defects. Prevents phosphorylation at this site." evidence="10 12">
    <original>S</original>
    <variation>A</variation>
    <location>
        <position position="534"/>
    </location>
</feature>
<feature type="mutagenesis site" description="Phospho-mimetic. Acts as if constitutively phosphorylated." evidence="10 12 14">
    <original>S</original>
    <variation>D</variation>
    <location>
        <position position="534"/>
    </location>
</feature>
<protein>
    <recommendedName>
        <fullName evidence="17">Polycystin-2</fullName>
        <shortName>CePc2</shortName>
    </recommendedName>
    <alternativeName>
        <fullName evidence="1">Polycystic kidney disease 2 protein homolog</fullName>
    </alternativeName>
</protein>
<accession>Q9U1S7</accession>
<reference evidence="19" key="1">
    <citation type="journal article" date="1998" name="Science">
        <title>Genome sequence of the nematode C. elegans: a platform for investigating biology.</title>
        <authorList>
            <consortium name="The C. elegans sequencing consortium"/>
        </authorList>
    </citation>
    <scope>NUCLEOTIDE SEQUENCE [LARGE SCALE GENOMIC DNA]</scope>
    <source>
        <strain evidence="19">Bristol N2</strain>
    </source>
</reference>
<reference evidence="18" key="2">
    <citation type="journal article" date="1999" name="Nature">
        <title>A polycystic kidney-disease gene homologue required for male mating behaviour in C. elegans.</title>
        <authorList>
            <person name="Barr M.M."/>
            <person name="Sternberg P.W."/>
        </authorList>
    </citation>
    <scope>TISSUE SPECIFICITY</scope>
</reference>
<reference evidence="18" key="3">
    <citation type="journal article" date="2001" name="Curr. Biol.">
        <title>The Caenorhabditis elegans autosomal dominant polycystic kidney disease gene homologs lov-1 and pkd-2 act in the same pathway.</title>
        <authorList>
            <person name="Barr M.M."/>
            <person name="DeModena J."/>
            <person name="Braun D."/>
            <person name="Nguyen C.Q."/>
            <person name="Hall D.H."/>
            <person name="Sternberg P.W."/>
        </authorList>
    </citation>
    <scope>FUNCTION</scope>
    <scope>SUBCELLULAR LOCATION</scope>
    <scope>TISSUE SPECIFICITY</scope>
    <scope>DISRUPTION PHENOTYPE</scope>
</reference>
<reference evidence="18" key="4">
    <citation type="journal article" date="2003" name="Nephron Exp. Nephrol.">
        <title>Towards understanding the polycystins.</title>
        <authorList>
            <person name="Kaletta T."/>
            <person name="Van der Craen M."/>
            <person name="Van Geel A."/>
            <person name="Dewulf N."/>
            <person name="Bogaert T."/>
            <person name="Branden M."/>
            <person name="King K.V."/>
            <person name="Buechner M."/>
            <person name="Barstead R."/>
            <person name="Hyink D."/>
            <person name="Li H.-P."/>
            <person name="Geng L."/>
            <person name="Burrow C."/>
            <person name="Wilson P."/>
        </authorList>
    </citation>
    <scope>FUNCTION</scope>
    <scope>SUBCELLULAR LOCATION</scope>
    <scope>TISSUE SPECIFICITY</scope>
    <scope>DEVELOPMENTAL STAGE</scope>
</reference>
<reference evidence="18" key="5">
    <citation type="journal article" date="2005" name="Cell Calcium">
        <title>Polycystin-2 accelerates Ca2+ release from intracellular stores in Caenorhabditis elegans.</title>
        <authorList>
            <person name="Koulen P."/>
            <person name="Duncan R.S."/>
            <person name="Liu J."/>
            <person name="Cohen N.E."/>
            <person name="Yannazzo J.-A.S."/>
            <person name="McClung N."/>
            <person name="Lockhart C.L."/>
            <person name="Branden M."/>
            <person name="Buechner M."/>
        </authorList>
    </citation>
    <scope>FUNCTION</scope>
</reference>
<reference evidence="18" key="6">
    <citation type="journal article" date="2005" name="Curr. Biol.">
        <title>The KLP-6 kinesin is required for male mating behaviors and polycystin localization in Caenorhabditis elegans.</title>
        <authorList>
            <person name="Peden E.M."/>
            <person name="Barr M.M."/>
        </authorList>
    </citation>
    <scope>FUNCTION</scope>
    <scope>SUBCELLULAR LOCATION</scope>
</reference>
<reference evidence="18" key="7">
    <citation type="journal article" date="2005" name="Mol. Biol. Cell">
        <title>ATP-2 interacts with the PLAT domain of LOV-1 and is involved in Caenorhabditis elegans polycystin signaling.</title>
        <authorList>
            <person name="Hu J."/>
            <person name="Barr M.M."/>
        </authorList>
    </citation>
    <scope>SUBCELLULAR LOCATION</scope>
    <scope>TISSUE SPECIFICITY</scope>
</reference>
<reference evidence="18" key="8">
    <citation type="journal article" date="2006" name="Development">
        <title>General and cell-type specific mechanisms target TRPP2/PKD-2 to cilia.</title>
        <authorList>
            <person name="Bae Y.-K."/>
            <person name="Qin H."/>
            <person name="Knobel K.M."/>
            <person name="Hu J."/>
            <person name="Rosenbaum J.L."/>
            <person name="Barr M.M."/>
        </authorList>
    </citation>
    <scope>SUBCELLULAR LOCATION</scope>
    <scope>TISSUE SPECIFICITY</scope>
</reference>
<reference evidence="18" key="9">
    <citation type="journal article" date="2006" name="Mol. Biol. Cell">
        <title>Casein kinase II and calcineurin modulate TRPP function and ciliary localization.</title>
        <authorList>
            <person name="Hu J."/>
            <person name="Bae Y.-K."/>
            <person name="Knobel K.M."/>
            <person name="Barr M.M."/>
        </authorList>
    </citation>
    <scope>SUBCELLULAR LOCATION</scope>
    <scope>TISSUE SPECIFICITY</scope>
    <scope>PHOSPHORYLATION AT SER-534</scope>
    <scope>DEPHOSPHORYLATION BY CALCINEURIN</scope>
    <scope>MUTAGENESIS OF SER-534</scope>
</reference>
<reference evidence="18" key="10">
    <citation type="journal article" date="2007" name="Mol. Biol. Cell">
        <title>STAM and Hrs down-regulate ciliary TRP receptors.</title>
        <authorList>
            <person name="Hu J."/>
            <person name="Wittekind S.G."/>
            <person name="Barr M.M."/>
        </authorList>
    </citation>
    <scope>SUBCELLULAR LOCATION</scope>
    <scope>MUTAGENESIS OF SER-534</scope>
</reference>
<reference evidence="18" key="11">
    <citation type="journal article" date="2008" name="Exp. Cell Res.">
        <title>Distinct protein domains regulate ciliary targeting and function of C. elegans PKD-2.</title>
        <authorList>
            <person name="Knobel K.M."/>
            <person name="Peden E.M."/>
            <person name="Barr M.M."/>
        </authorList>
    </citation>
    <scope>FUNCTION</scope>
    <scope>SUBCELLULAR LOCATION</scope>
    <scope>DOMAIN</scope>
</reference>
<reference key="12">
    <citation type="journal article" date="2015" name="Sci. Rep.">
        <title>BBS4 and BBS5 show functional redundancy in the BBSome to regulate the degradative sorting of ciliary sensory receptors.</title>
        <authorList>
            <person name="Xu Q."/>
            <person name="Zhang Y."/>
            <person name="Wei Q."/>
            <person name="Huang Y."/>
            <person name="Li Y."/>
            <person name="Ling K."/>
            <person name="Hu J."/>
        </authorList>
    </citation>
    <scope>SUBCELLULAR LOCATION</scope>
    <scope>TISSUE SPECIFICITY</scope>
    <scope>MUTAGENESIS OF SER-534</scope>
</reference>
<reference key="13">
    <citation type="journal article" date="2017" name="Cytoskeleton">
        <title>MAPK-15 is a ciliary protein required for PKD-2 localization and male mating behavior in Caenorhabditis elegans.</title>
        <authorList>
            <person name="Piasecki B.P."/>
            <person name="Sasani T.A."/>
            <person name="Lessenger A.T."/>
            <person name="Huth N."/>
            <person name="Farrell S."/>
        </authorList>
    </citation>
    <scope>FUNCTION</scope>
    <scope>SUBCELLULAR LOCATION</scope>
    <scope>TISSUE SPECIFICITY</scope>
    <scope>DISRUPTION PHENOTYPE</scope>
</reference>
<reference key="14">
    <citation type="journal article" date="2019" name="Elife">
        <title>The Makorin lep-2 and the lncRNA lep-5 regulate lin-28 to schedule sexual maturation of the C. elegans nervous system.</title>
        <authorList>
            <person name="Lawson H."/>
            <person name="Vuong E."/>
            <person name="Miller R.M."/>
            <person name="Kiontke K."/>
            <person name="Fitch D.H."/>
            <person name="Portman D.S."/>
        </authorList>
    </citation>
    <scope>TISSUE SPECIFICITY</scope>
    <scope>DEVELOPMENTAL STAGE</scope>
</reference>
<organism>
    <name type="scientific">Caenorhabditis elegans</name>
    <dbReference type="NCBI Taxonomy" id="6239"/>
    <lineage>
        <taxon>Eukaryota</taxon>
        <taxon>Metazoa</taxon>
        <taxon>Ecdysozoa</taxon>
        <taxon>Nematoda</taxon>
        <taxon>Chromadorea</taxon>
        <taxon>Rhabditida</taxon>
        <taxon>Rhabditina</taxon>
        <taxon>Rhabditomorpha</taxon>
        <taxon>Rhabditoidea</taxon>
        <taxon>Rhabditidae</taxon>
        <taxon>Peloderinae</taxon>
        <taxon>Caenorhabditis</taxon>
    </lineage>
</organism>
<comment type="function">
    <text evidence="5 6 8 9 13 15">Functions as a calcium permeable cation channel (PubMed:15862350). Required for 2 aspects of male mating behavior: response to hermaphrodite contact and vulva location (PubMed:11553327, PubMed:12411744, PubMed:15753033, PubMed:15862350, PubMed:18037411, PubMed:28745435). Acts in the same pathway as lov-1 and atp-2 in response behavior (PubMed:11553327).</text>
</comment>
<comment type="subcellular location">
    <subcellularLocation>
        <location evidence="5 6 7 8 10 11 12 13">Cell membrane</location>
        <topology evidence="5 6 7 8 10 11 12 13">Multi-pass membrane protein</topology>
    </subcellularLocation>
    <subcellularLocation>
        <location evidence="5 6 7 8 10 11 12 13">Cell projection</location>
        <location evidence="5 6 7 8 10 11 12 13">Cilium membrane</location>
    </subcellularLocation>
    <subcellularLocation>
        <location evidence="5 6 7 8 10 11 12 13 14 15">Cell projection</location>
        <location evidence="5 6 7 8 10 11 12 13 14 15">Cilium</location>
    </subcellularLocation>
    <subcellularLocation>
        <location evidence="5 6 7 8 10 11 12 13">Cell projection</location>
        <location evidence="5 6 7 8 10 11 12 13">Axon</location>
    </subcellularLocation>
    <subcellularLocation>
        <location evidence="5 6 7 8 10 11 12 13">Cell projection</location>
        <location evidence="5 6 7 8 10 11 12 13">Dendrite</location>
    </subcellularLocation>
    <subcellularLocation>
        <location evidence="5 6 7 8 10 11 12 13">Perikaryon</location>
    </subcellularLocation>
    <subcellularLocation>
        <location evidence="5 6 7 8 10 11 12 13">Endoplasmic reticulum membrane</location>
    </subcellularLocation>
    <text evidence="5 6 7 8 10 11 12 13">Synthesized in the endoplasmic reticulum, and then packaged into vesicles that are transported to the ciliary base and inserted into the ciliary membrane. Localizes to both the ciliary base and cilium proper.</text>
</comment>
<comment type="tissue specificity">
    <text evidence="4 5 6 7 10 11 14 15 16">Exclusively expressed in a subset of 3 categories of adult male sensory neurons: ray neurons, hook neurons and head cephalic (CEM) neurons (PubMed:10517638, PubMed:11553327, PubMed:12411744, PubMed:15563610, PubMed:16481400, PubMed:16943275, PubMed:31264582). Expressed in the male tail (PubMed:26150102, PubMed:28745435).</text>
</comment>
<comment type="developmental stage">
    <text evidence="6 16">First expressed during L4 and peaks in the adult male.</text>
</comment>
<comment type="domain">
    <text evidence="13">The transmembrane domains are sufficient for localization in the cilium. The cytoplasmic tails are necessary for localization in cell bodies and anchoring at the ciliary base. Cytoplasmic tails also regulate sensory function.</text>
</comment>
<comment type="PTM">
    <text evidence="10">Phosphorylated. CK2 (kin-3 and kin-10) and calcineurin act antagonistically to regulate the phosphorylation state.</text>
</comment>
<comment type="disruption phenotype">
    <text evidence="5 15">Worms exhibit defects in 2 aspects of male mating behavior: response to hermaphrodite contact and vulva location.</text>
</comment>
<comment type="similarity">
    <text evidence="2">Belongs to the polycystin family.</text>
</comment>
<name>PKD2_CAEEL</name>
<gene>
    <name evidence="20" type="primary">pkd-2</name>
    <name evidence="20" type="synonym">pdk-2</name>
    <name evidence="20" type="ORF">Y73F8A.1</name>
</gene>
<dbReference type="EMBL" id="BX284604">
    <property type="protein sequence ID" value="CAB60565.3"/>
    <property type="molecule type" value="Genomic_DNA"/>
</dbReference>
<dbReference type="RefSeq" id="NP_502838.3">
    <property type="nucleotide sequence ID" value="NM_070437.4"/>
</dbReference>
<dbReference type="SMR" id="Q9U1S7"/>
<dbReference type="BioGRID" id="43506">
    <property type="interactions" value="1"/>
</dbReference>
<dbReference type="ComplexPortal" id="CPX-3887">
    <property type="entry name" value="TRPP complex"/>
</dbReference>
<dbReference type="FunCoup" id="Q9U1S7">
    <property type="interactions" value="264"/>
</dbReference>
<dbReference type="IntAct" id="Q9U1S7">
    <property type="interactions" value="4"/>
</dbReference>
<dbReference type="MINT" id="Q9U1S7"/>
<dbReference type="STRING" id="6239.Y73F8A.1.1"/>
<dbReference type="TCDB" id="1.A.5.2.4">
    <property type="family name" value="the polycystin cation channel (pcc) family"/>
</dbReference>
<dbReference type="GlyCosmos" id="Q9U1S7">
    <property type="glycosylation" value="3 sites, No reported glycans"/>
</dbReference>
<dbReference type="iPTMnet" id="Q9U1S7"/>
<dbReference type="PaxDb" id="6239-Y73F8A.1"/>
<dbReference type="PeptideAtlas" id="Q9U1S7"/>
<dbReference type="EnsemblMetazoa" id="Y73F8A.1.1">
    <property type="protein sequence ID" value="Y73F8A.1.1"/>
    <property type="gene ID" value="WBGene00004035"/>
</dbReference>
<dbReference type="GeneID" id="178424"/>
<dbReference type="KEGG" id="cel:CELE_Y73F8A.1"/>
<dbReference type="UCSC" id="Y73F8A.1">
    <property type="organism name" value="c. elegans"/>
</dbReference>
<dbReference type="AGR" id="WB:WBGene00004035"/>
<dbReference type="CTD" id="178424"/>
<dbReference type="WormBase" id="Y73F8A.1">
    <property type="protein sequence ID" value="CE38663"/>
    <property type="gene ID" value="WBGene00004035"/>
    <property type="gene designation" value="pkd-2"/>
</dbReference>
<dbReference type="eggNOG" id="KOG3599">
    <property type="taxonomic scope" value="Eukaryota"/>
</dbReference>
<dbReference type="GeneTree" id="ENSGT00880000138223"/>
<dbReference type="HOGENOM" id="CLU_012097_0_0_1"/>
<dbReference type="InParanoid" id="Q9U1S7"/>
<dbReference type="OMA" id="REWYIRT"/>
<dbReference type="OrthoDB" id="444119at2759"/>
<dbReference type="PhylomeDB" id="Q9U1S7"/>
<dbReference type="Reactome" id="R-CEL-5620916">
    <property type="pathway name" value="VxPx cargo-targeting to cilium"/>
</dbReference>
<dbReference type="PRO" id="PR:Q9U1S7"/>
<dbReference type="Proteomes" id="UP000001940">
    <property type="component" value="Chromosome IV"/>
</dbReference>
<dbReference type="Bgee" id="WBGene00004035">
    <property type="expression patterns" value="Expressed in material anatomical entity and 2 other cell types or tissues"/>
</dbReference>
<dbReference type="GO" id="GO:0030424">
    <property type="term" value="C:axon"/>
    <property type="evidence" value="ECO:0000314"/>
    <property type="project" value="WormBase"/>
</dbReference>
<dbReference type="GO" id="GO:0060170">
    <property type="term" value="C:ciliary membrane"/>
    <property type="evidence" value="ECO:0000314"/>
    <property type="project" value="UniProtKB"/>
</dbReference>
<dbReference type="GO" id="GO:0005929">
    <property type="term" value="C:cilium"/>
    <property type="evidence" value="ECO:0000314"/>
    <property type="project" value="UniProtKB"/>
</dbReference>
<dbReference type="GO" id="GO:0030425">
    <property type="term" value="C:dendrite"/>
    <property type="evidence" value="ECO:0000314"/>
    <property type="project" value="WormBase"/>
</dbReference>
<dbReference type="GO" id="GO:0005783">
    <property type="term" value="C:endoplasmic reticulum"/>
    <property type="evidence" value="ECO:0000314"/>
    <property type="project" value="UniProtKB"/>
</dbReference>
<dbReference type="GO" id="GO:0005789">
    <property type="term" value="C:endoplasmic reticulum membrane"/>
    <property type="evidence" value="ECO:0007669"/>
    <property type="project" value="UniProtKB-SubCell"/>
</dbReference>
<dbReference type="GO" id="GO:0016020">
    <property type="term" value="C:membrane"/>
    <property type="evidence" value="ECO:0000314"/>
    <property type="project" value="UniProtKB"/>
</dbReference>
<dbReference type="GO" id="GO:0043025">
    <property type="term" value="C:neuronal cell body"/>
    <property type="evidence" value="ECO:0000314"/>
    <property type="project" value="UniProtKB"/>
</dbReference>
<dbReference type="GO" id="GO:0097730">
    <property type="term" value="C:non-motile cilium"/>
    <property type="evidence" value="ECO:0000314"/>
    <property type="project" value="WormBase"/>
</dbReference>
<dbReference type="GO" id="GO:0031090">
    <property type="term" value="C:organelle membrane"/>
    <property type="evidence" value="ECO:0000314"/>
    <property type="project" value="WormBase"/>
</dbReference>
<dbReference type="GO" id="GO:0043204">
    <property type="term" value="C:perikaryon"/>
    <property type="evidence" value="ECO:0007669"/>
    <property type="project" value="UniProtKB-SubCell"/>
</dbReference>
<dbReference type="GO" id="GO:0048471">
    <property type="term" value="C:perinuclear region of cytoplasm"/>
    <property type="evidence" value="ECO:0000314"/>
    <property type="project" value="WormBase"/>
</dbReference>
<dbReference type="GO" id="GO:0005886">
    <property type="term" value="C:plasma membrane"/>
    <property type="evidence" value="ECO:0000314"/>
    <property type="project" value="UniProtKB"/>
</dbReference>
<dbReference type="GO" id="GO:0071683">
    <property type="term" value="C:sensory dendrite"/>
    <property type="evidence" value="ECO:0000314"/>
    <property type="project" value="UniProtKB"/>
</dbReference>
<dbReference type="GO" id="GO:0005262">
    <property type="term" value="F:calcium channel activity"/>
    <property type="evidence" value="ECO:0000314"/>
    <property type="project" value="UniProtKB"/>
</dbReference>
<dbReference type="GO" id="GO:0005509">
    <property type="term" value="F:calcium ion binding"/>
    <property type="evidence" value="ECO:0007669"/>
    <property type="project" value="InterPro"/>
</dbReference>
<dbReference type="GO" id="GO:0006816">
    <property type="term" value="P:calcium ion transport"/>
    <property type="evidence" value="ECO:0000314"/>
    <property type="project" value="UniProtKB"/>
</dbReference>
<dbReference type="GO" id="GO:0050982">
    <property type="term" value="P:detection of mechanical stimulus"/>
    <property type="evidence" value="ECO:0000318"/>
    <property type="project" value="GO_Central"/>
</dbReference>
<dbReference type="GO" id="GO:0060179">
    <property type="term" value="P:male mating behavior"/>
    <property type="evidence" value="ECO:0000314"/>
    <property type="project" value="UniProtKB"/>
</dbReference>
<dbReference type="GO" id="GO:0007617">
    <property type="term" value="P:mating behavior"/>
    <property type="evidence" value="ECO:0000315"/>
    <property type="project" value="WormBase"/>
</dbReference>
<dbReference type="GO" id="GO:0023041">
    <property type="term" value="P:neuronal signal transduction"/>
    <property type="evidence" value="ECO:0000305"/>
    <property type="project" value="WormBase"/>
</dbReference>
<dbReference type="GO" id="GO:1902435">
    <property type="term" value="P:regulation of male mating behavior"/>
    <property type="evidence" value="ECO:0000303"/>
    <property type="project" value="ComplexPortal"/>
</dbReference>
<dbReference type="GO" id="GO:0034606">
    <property type="term" value="P:response to hermaphrodite contact"/>
    <property type="evidence" value="ECO:0000315"/>
    <property type="project" value="UniProtKB"/>
</dbReference>
<dbReference type="GO" id="GO:0034608">
    <property type="term" value="P:vulval location"/>
    <property type="evidence" value="ECO:0000315"/>
    <property type="project" value="UniProtKB"/>
</dbReference>
<dbReference type="FunFam" id="1.10.287.70:FF:000055">
    <property type="entry name" value="Polycystic kidney disease 2-like 1"/>
    <property type="match status" value="1"/>
</dbReference>
<dbReference type="Gene3D" id="1.10.287.70">
    <property type="match status" value="1"/>
</dbReference>
<dbReference type="Gene3D" id="1.20.5.340">
    <property type="match status" value="1"/>
</dbReference>
<dbReference type="InterPro" id="IPR013122">
    <property type="entry name" value="PKD1_2_channel"/>
</dbReference>
<dbReference type="InterPro" id="IPR003915">
    <property type="entry name" value="PKD_2"/>
</dbReference>
<dbReference type="InterPro" id="IPR051223">
    <property type="entry name" value="Polycystin"/>
</dbReference>
<dbReference type="InterPro" id="IPR046791">
    <property type="entry name" value="Polycystin_dom"/>
</dbReference>
<dbReference type="PANTHER" id="PTHR10877:SF183">
    <property type="entry name" value="AT14535P-RELATED"/>
    <property type="match status" value="1"/>
</dbReference>
<dbReference type="PANTHER" id="PTHR10877">
    <property type="entry name" value="POLYCYSTIN FAMILY MEMBER"/>
    <property type="match status" value="1"/>
</dbReference>
<dbReference type="Pfam" id="PF08016">
    <property type="entry name" value="PKD_channel"/>
    <property type="match status" value="1"/>
</dbReference>
<dbReference type="Pfam" id="PF20519">
    <property type="entry name" value="Polycystin_dom"/>
    <property type="match status" value="1"/>
</dbReference>
<dbReference type="PRINTS" id="PR01433">
    <property type="entry name" value="POLYCYSTIN2"/>
</dbReference>
<dbReference type="SUPFAM" id="SSF81324">
    <property type="entry name" value="Voltage-gated potassium channels"/>
    <property type="match status" value="1"/>
</dbReference>
<sequence>MNYGAADERWANPPQPVAAAEHGPSFDHSMVSEEYEHDKKKNPAQKEGISFSQALLASGHEKSDGKIKLTARSFMEVGGYAVFLIVLVYVAFAQNSIQSYYYSKVMSDLFVASTGASGAPAFGSCTSMDNIWDWLSQVLIPGIYWTETSNSTDNENMIYYENRLLGEPRIRMLKVTNDSCTVMKSFQREIKECFANYEEKLEDKTMVGDGSVDAFIYATAKELENLKTVGTIASYGGGGFVQRLPVAGSTEAQSAIATLKANRWIDRGSRAIIVDFALYNANINLFCVVKLLFELPASGGVITTPKLMTYDLLTYQTSGGTRMMIFEGIFCGFILYFIFEELFAIGRHRLHYLTQFWNLVDVVLLGFSVATIILSVNRTKTGVNRVNSVIENGLTNAPFDDVTSSENSYLNIKACVVFVAWVKVFKFISVNKTMSQLSSTLTRSAKDIGGFAVMFAVFFFAFAQFGYLCFGTQIADYSNLYNSAFALLRLILGDFNFSALESCNRFFGPAFFIAYVFFVSFILLNMFLAIINDSYVEVKAELARKKDGEGILDWFMNKVRGLTKRGKRPDAPGEDATYEDYKLMLYRAGYAEKDINEAFTRFNVTSMTEHVPEKVAEDIADEVARMTEQKRNYMENHRDYANLNRRVDQMQESVFSIVDRIEGVNATLQTIEKQRVQQQDGGNLMDLSALLTNQVRNRESAARRPTITSIADKKEE</sequence>
<proteinExistence type="evidence at protein level"/>